<sequence>MSKETSYPKELLCADEKVVYDAIVVGAGVVGPCVATALARKGKKVLIVEREWSQPDRIVGELMQPAGVRALRSLGMVQAINNIDACSTSGYTVIYNGEKISFAYPYKADLSPPEKIPDLVFDGNDKVVDDGTISAKEFEEDEREHGVGFVHGRFLQNLRAICAAEDRVTRLQGNVISILRNDSKEVIGAKVDVPGRGKVDFKAHMTFVCDGIFSRFRKELSTTNTSKVWSSFVGLSLHHADLPTKHHGHVILGSEHMPVIAYQISSTETRILCAYNYPTLPKNVPEWLQKEVQPFIPPSLRKSFDAALESKSYKCMPNSWLPASQNNVTGLCVVGDALNMRHPLTGGGMAVGLMDVVLLVKTIGDMDFSDREEVLNELLGFHYERKAHACVINTLSIALYSLFAADSYYLKKLQKGCFEYLGRGEDWVRQPISFLSGVLPSPYLLTKVFFTVALYSVLINFRGRTPLGFLLAIYEGFAIIFTAAKVFTPFLYEQLLQ</sequence>
<dbReference type="EC" id="1.14.14.17" evidence="1"/>
<dbReference type="EMBL" id="AE016814">
    <property type="protein sequence ID" value="AAS50225.1"/>
    <property type="molecule type" value="Genomic_DNA"/>
</dbReference>
<dbReference type="RefSeq" id="NP_982401.1">
    <property type="nucleotide sequence ID" value="NM_207754.1"/>
</dbReference>
<dbReference type="SMR" id="Q75F69"/>
<dbReference type="FunCoup" id="Q75F69">
    <property type="interactions" value="193"/>
</dbReference>
<dbReference type="STRING" id="284811.Q75F69"/>
<dbReference type="EnsemblFungi" id="AAS50225">
    <property type="protein sequence ID" value="AAS50225"/>
    <property type="gene ID" value="AGOS_AAL141C"/>
</dbReference>
<dbReference type="GeneID" id="4618669"/>
<dbReference type="KEGG" id="ago:AGOS_AAL141C"/>
<dbReference type="eggNOG" id="KOG1298">
    <property type="taxonomic scope" value="Eukaryota"/>
</dbReference>
<dbReference type="HOGENOM" id="CLU_026390_0_0_1"/>
<dbReference type="InParanoid" id="Q75F69"/>
<dbReference type="OMA" id="AKRTFYW"/>
<dbReference type="OrthoDB" id="1678617at2759"/>
<dbReference type="UniPathway" id="UPA00767">
    <property type="reaction ID" value="UER00752"/>
</dbReference>
<dbReference type="Proteomes" id="UP000000591">
    <property type="component" value="Chromosome I"/>
</dbReference>
<dbReference type="GO" id="GO:0005783">
    <property type="term" value="C:endoplasmic reticulum"/>
    <property type="evidence" value="ECO:0000318"/>
    <property type="project" value="GO_Central"/>
</dbReference>
<dbReference type="GO" id="GO:0005789">
    <property type="term" value="C:endoplasmic reticulum membrane"/>
    <property type="evidence" value="ECO:0007669"/>
    <property type="project" value="UniProtKB-SubCell"/>
</dbReference>
<dbReference type="GO" id="GO:0005811">
    <property type="term" value="C:lipid droplet"/>
    <property type="evidence" value="ECO:0007669"/>
    <property type="project" value="EnsemblFungi"/>
</dbReference>
<dbReference type="GO" id="GO:0050660">
    <property type="term" value="F:flavin adenine dinucleotide binding"/>
    <property type="evidence" value="ECO:0007669"/>
    <property type="project" value="InterPro"/>
</dbReference>
<dbReference type="GO" id="GO:0004506">
    <property type="term" value="F:squalene monooxygenase activity"/>
    <property type="evidence" value="ECO:0000318"/>
    <property type="project" value="GO_Central"/>
</dbReference>
<dbReference type="GO" id="GO:0006696">
    <property type="term" value="P:ergosterol biosynthetic process"/>
    <property type="evidence" value="ECO:0000318"/>
    <property type="project" value="GO_Central"/>
</dbReference>
<dbReference type="Gene3D" id="3.50.50.60">
    <property type="entry name" value="FAD/NAD(P)-binding domain"/>
    <property type="match status" value="1"/>
</dbReference>
<dbReference type="InterPro" id="IPR036188">
    <property type="entry name" value="FAD/NAD-bd_sf"/>
</dbReference>
<dbReference type="InterPro" id="IPR013698">
    <property type="entry name" value="Squalene_epoxidase"/>
</dbReference>
<dbReference type="InterPro" id="IPR040125">
    <property type="entry name" value="Squalene_monox"/>
</dbReference>
<dbReference type="PANTHER" id="PTHR10835">
    <property type="entry name" value="SQUALENE MONOOXYGENASE"/>
    <property type="match status" value="1"/>
</dbReference>
<dbReference type="PANTHER" id="PTHR10835:SF0">
    <property type="entry name" value="SQUALENE MONOOXYGENASE"/>
    <property type="match status" value="1"/>
</dbReference>
<dbReference type="Pfam" id="PF08491">
    <property type="entry name" value="SE"/>
    <property type="match status" value="1"/>
</dbReference>
<dbReference type="PRINTS" id="PR00420">
    <property type="entry name" value="RNGMNOXGNASE"/>
</dbReference>
<dbReference type="SUPFAM" id="SSF51905">
    <property type="entry name" value="FAD/NAD(P)-binding domain"/>
    <property type="match status" value="1"/>
</dbReference>
<name>ERG1_EREGS</name>
<proteinExistence type="inferred from homology"/>
<evidence type="ECO:0000250" key="1">
    <source>
        <dbReference type="UniProtKB" id="P32476"/>
    </source>
</evidence>
<evidence type="ECO:0000250" key="2">
    <source>
        <dbReference type="UniProtKB" id="Q14534"/>
    </source>
</evidence>
<evidence type="ECO:0000255" key="3"/>
<evidence type="ECO:0000305" key="4"/>
<organism>
    <name type="scientific">Eremothecium gossypii (strain ATCC 10895 / CBS 109.51 / FGSC 9923 / NRRL Y-1056)</name>
    <name type="common">Yeast</name>
    <name type="synonym">Ashbya gossypii</name>
    <dbReference type="NCBI Taxonomy" id="284811"/>
    <lineage>
        <taxon>Eukaryota</taxon>
        <taxon>Fungi</taxon>
        <taxon>Dikarya</taxon>
        <taxon>Ascomycota</taxon>
        <taxon>Saccharomycotina</taxon>
        <taxon>Saccharomycetes</taxon>
        <taxon>Saccharomycetales</taxon>
        <taxon>Saccharomycetaceae</taxon>
        <taxon>Eremothecium</taxon>
    </lineage>
</organism>
<accession>Q75F69</accession>
<protein>
    <recommendedName>
        <fullName>Squalene monooxygenase</fullName>
        <ecNumber evidence="1">1.14.14.17</ecNumber>
    </recommendedName>
    <alternativeName>
        <fullName>Squalene epoxidase</fullName>
        <shortName>SE</shortName>
    </alternativeName>
</protein>
<feature type="chain" id="PRO_0000209847" description="Squalene monooxygenase">
    <location>
        <begin position="1"/>
        <end position="497"/>
    </location>
</feature>
<feature type="transmembrane region" description="Helical" evidence="3">
    <location>
        <begin position="434"/>
        <end position="454"/>
    </location>
</feature>
<feature type="transmembrane region" description="Helical" evidence="3">
    <location>
        <begin position="467"/>
        <end position="487"/>
    </location>
</feature>
<feature type="binding site" evidence="2">
    <location>
        <begin position="29"/>
        <end position="30"/>
    </location>
    <ligand>
        <name>FAD</name>
        <dbReference type="ChEBI" id="CHEBI:57692"/>
    </ligand>
</feature>
<feature type="binding site" evidence="2">
    <location>
        <begin position="49"/>
        <end position="50"/>
    </location>
    <ligand>
        <name>FAD</name>
        <dbReference type="ChEBI" id="CHEBI:57692"/>
    </ligand>
</feature>
<feature type="binding site" evidence="2">
    <location>
        <position position="57"/>
    </location>
    <ligand>
        <name>FAD</name>
        <dbReference type="ChEBI" id="CHEBI:57692"/>
    </ligand>
</feature>
<feature type="binding site" evidence="2">
    <location>
        <position position="159"/>
    </location>
    <ligand>
        <name>FAD</name>
        <dbReference type="ChEBI" id="CHEBI:57692"/>
    </ligand>
</feature>
<feature type="binding site" evidence="2">
    <location>
        <position position="175"/>
    </location>
    <ligand>
        <name>FAD</name>
        <dbReference type="ChEBI" id="CHEBI:57692"/>
    </ligand>
</feature>
<feature type="binding site" evidence="2">
    <location>
        <position position="336"/>
    </location>
    <ligand>
        <name>FAD</name>
        <dbReference type="ChEBI" id="CHEBI:57692"/>
    </ligand>
</feature>
<feature type="binding site" evidence="2">
    <location>
        <position position="349"/>
    </location>
    <ligand>
        <name>FAD</name>
        <dbReference type="ChEBI" id="CHEBI:57692"/>
    </ligand>
</feature>
<feature type="site" description="Important for enzyme activity" evidence="2">
    <location>
        <position position="91"/>
    </location>
</feature>
<reference key="1">
    <citation type="journal article" date="2004" name="Science">
        <title>The Ashbya gossypii genome as a tool for mapping the ancient Saccharomyces cerevisiae genome.</title>
        <authorList>
            <person name="Dietrich F.S."/>
            <person name="Voegeli S."/>
            <person name="Brachat S."/>
            <person name="Lerch A."/>
            <person name="Gates K."/>
            <person name="Steiner S."/>
            <person name="Mohr C."/>
            <person name="Poehlmann R."/>
            <person name="Luedi P."/>
            <person name="Choi S."/>
            <person name="Wing R.A."/>
            <person name="Flavier A."/>
            <person name="Gaffney T.D."/>
            <person name="Philippsen P."/>
        </authorList>
    </citation>
    <scope>NUCLEOTIDE SEQUENCE [LARGE SCALE GENOMIC DNA]</scope>
    <source>
        <strain>ATCC 10895 / CBS 109.51 / FGSC 9923 / NRRL Y-1056</strain>
    </source>
</reference>
<reference key="2">
    <citation type="journal article" date="2013" name="G3 (Bethesda)">
        <title>Genomes of Ashbya fungi isolated from insects reveal four mating-type loci, numerous translocations, lack of transposons, and distinct gene duplications.</title>
        <authorList>
            <person name="Dietrich F.S."/>
            <person name="Voegeli S."/>
            <person name="Kuo S."/>
            <person name="Philippsen P."/>
        </authorList>
    </citation>
    <scope>GENOME REANNOTATION</scope>
    <source>
        <strain>ATCC 10895 / CBS 109.51 / FGSC 9923 / NRRL Y-1056</strain>
    </source>
</reference>
<keyword id="KW-0256">Endoplasmic reticulum</keyword>
<keyword id="KW-0274">FAD</keyword>
<keyword id="KW-0285">Flavoprotein</keyword>
<keyword id="KW-0472">Membrane</keyword>
<keyword id="KW-0492">Microsome</keyword>
<keyword id="KW-0560">Oxidoreductase</keyword>
<keyword id="KW-1185">Reference proteome</keyword>
<keyword id="KW-0812">Transmembrane</keyword>
<keyword id="KW-1133">Transmembrane helix</keyword>
<comment type="function">
    <text evidence="1">Catalyzes the stereospecific oxidation of squalene to (S)-2,3-epoxysqualene, and is considered to be a rate-limiting enzyme in steroid biosynthesis.</text>
</comment>
<comment type="catalytic activity">
    <reaction evidence="1">
        <text>squalene + reduced [NADPH--hemoprotein reductase] + O2 = (S)-2,3-epoxysqualene + oxidized [NADPH--hemoprotein reductase] + H2O + H(+)</text>
        <dbReference type="Rhea" id="RHEA:25282"/>
        <dbReference type="Rhea" id="RHEA-COMP:11964"/>
        <dbReference type="Rhea" id="RHEA-COMP:11965"/>
        <dbReference type="ChEBI" id="CHEBI:15377"/>
        <dbReference type="ChEBI" id="CHEBI:15378"/>
        <dbReference type="ChEBI" id="CHEBI:15379"/>
        <dbReference type="ChEBI" id="CHEBI:15440"/>
        <dbReference type="ChEBI" id="CHEBI:15441"/>
        <dbReference type="ChEBI" id="CHEBI:57618"/>
        <dbReference type="ChEBI" id="CHEBI:58210"/>
        <dbReference type="EC" id="1.14.14.17"/>
    </reaction>
</comment>
<comment type="cofactor">
    <cofactor evidence="2">
        <name>FAD</name>
        <dbReference type="ChEBI" id="CHEBI:57692"/>
    </cofactor>
</comment>
<comment type="pathway">
    <text evidence="1">Terpene metabolism; lanosterol biosynthesis; lanosterol from farnesyl diphosphate: step 2/3.</text>
</comment>
<comment type="subcellular location">
    <subcellularLocation>
        <location evidence="1">Microsome membrane</location>
        <topology evidence="1">Multi-pass membrane protein</topology>
    </subcellularLocation>
    <subcellularLocation>
        <location evidence="1">Endoplasmic reticulum membrane</location>
        <topology evidence="1">Multi-pass membrane protein</topology>
    </subcellularLocation>
</comment>
<comment type="similarity">
    <text evidence="4">Belongs to the squalene monooxygenase family.</text>
</comment>
<gene>
    <name type="primary">ERG1</name>
    <name type="ordered locus">AAL141C</name>
</gene>